<keyword id="KW-0963">Cytoplasm</keyword>
<keyword id="KW-0238">DNA-binding</keyword>
<keyword id="KW-0255">Endonuclease</keyword>
<keyword id="KW-0378">Hydrolase</keyword>
<keyword id="KW-0540">Nuclease</keyword>
<keyword id="KW-0694">RNA-binding</keyword>
<proteinExistence type="inferred from homology"/>
<feature type="chain" id="PRO_1000213799" description="Endoribonuclease SymE">
    <location>
        <begin position="1"/>
        <end position="113"/>
    </location>
</feature>
<feature type="domain" description="SpoVT-AbrB" evidence="2">
    <location>
        <begin position="29"/>
        <end position="74"/>
    </location>
</feature>
<name>SYME_ECOBW</name>
<sequence length="113" mass="12203">MTDTHSIAQPFEAEVSPANNRHVTVGYASRYPDYSRIPAITLKGQWLEAAGFATGTAVDVKVMEGCIVLTAQPPAAEESELMQSLRQVCKLSARKQKQVQAFIGVIAGKQKVA</sequence>
<evidence type="ECO:0000255" key="1">
    <source>
        <dbReference type="HAMAP-Rule" id="MF_01193"/>
    </source>
</evidence>
<evidence type="ECO:0000255" key="2">
    <source>
        <dbReference type="PROSITE-ProRule" id="PRU01076"/>
    </source>
</evidence>
<accession>C4ZT30</accession>
<dbReference type="EC" id="3.1.-.-" evidence="1"/>
<dbReference type="EMBL" id="CP001396">
    <property type="protein sequence ID" value="ACR62412.1"/>
    <property type="molecule type" value="Genomic_DNA"/>
</dbReference>
<dbReference type="RefSeq" id="WP_000132601.1">
    <property type="nucleotide sequence ID" value="NC_012759.1"/>
</dbReference>
<dbReference type="KEGG" id="ebw:BWG_4040"/>
<dbReference type="HOGENOM" id="CLU_151239_0_0_6"/>
<dbReference type="GO" id="GO:0005737">
    <property type="term" value="C:cytoplasm"/>
    <property type="evidence" value="ECO:0007669"/>
    <property type="project" value="UniProtKB-SubCell"/>
</dbReference>
<dbReference type="GO" id="GO:0003677">
    <property type="term" value="F:DNA binding"/>
    <property type="evidence" value="ECO:0007669"/>
    <property type="project" value="UniProtKB-KW"/>
</dbReference>
<dbReference type="GO" id="GO:0003723">
    <property type="term" value="F:RNA binding"/>
    <property type="evidence" value="ECO:0007669"/>
    <property type="project" value="UniProtKB-KW"/>
</dbReference>
<dbReference type="GO" id="GO:0004521">
    <property type="term" value="F:RNA endonuclease activity"/>
    <property type="evidence" value="ECO:0007669"/>
    <property type="project" value="UniProtKB-UniRule"/>
</dbReference>
<dbReference type="GO" id="GO:0016070">
    <property type="term" value="P:RNA metabolic process"/>
    <property type="evidence" value="ECO:0007669"/>
    <property type="project" value="InterPro"/>
</dbReference>
<dbReference type="HAMAP" id="MF_01193">
    <property type="entry name" value="Endoribonucl_SymE"/>
    <property type="match status" value="1"/>
</dbReference>
<dbReference type="InterPro" id="IPR007159">
    <property type="entry name" value="SpoVT-AbrB_dom"/>
</dbReference>
<dbReference type="InterPro" id="IPR014944">
    <property type="entry name" value="Toxin_SymE-like"/>
</dbReference>
<dbReference type="InterPro" id="IPR020883">
    <property type="entry name" value="TypeI_TA_SymE"/>
</dbReference>
<dbReference type="NCBIfam" id="NF010128">
    <property type="entry name" value="PRK13605.1"/>
    <property type="match status" value="1"/>
</dbReference>
<dbReference type="Pfam" id="PF08845">
    <property type="entry name" value="SymE_toxin"/>
    <property type="match status" value="1"/>
</dbReference>
<dbReference type="PROSITE" id="PS51740">
    <property type="entry name" value="SPOVT_ABRB"/>
    <property type="match status" value="1"/>
</dbReference>
<comment type="function">
    <text evidence="1">Involved in the degradation and recycling of damaged RNA. It is itself a target for degradation by the ATP-dependent protease Lon.</text>
</comment>
<comment type="subcellular location">
    <subcellularLocation>
        <location evidence="1">Cytoplasm</location>
    </subcellularLocation>
</comment>
<comment type="similarity">
    <text evidence="1">Belongs to the SymE family.</text>
</comment>
<reference key="1">
    <citation type="journal article" date="2009" name="J. Bacteriol.">
        <title>Genomic sequencing reveals regulatory mutations and recombinational events in the widely used MC4100 lineage of Escherichia coli K-12.</title>
        <authorList>
            <person name="Ferenci T."/>
            <person name="Zhou Z."/>
            <person name="Betteridge T."/>
            <person name="Ren Y."/>
            <person name="Liu Y."/>
            <person name="Feng L."/>
            <person name="Reeves P.R."/>
            <person name="Wang L."/>
        </authorList>
    </citation>
    <scope>NUCLEOTIDE SEQUENCE [LARGE SCALE GENOMIC DNA]</scope>
    <source>
        <strain>K12 / MC4100 / BW2952</strain>
    </source>
</reference>
<gene>
    <name evidence="1" type="primary">symE</name>
    <name type="ordered locus">BWG_4040</name>
</gene>
<protein>
    <recommendedName>
        <fullName evidence="1">Endoribonuclease SymE</fullName>
        <ecNumber evidence="1">3.1.-.-</ecNumber>
    </recommendedName>
</protein>
<organism>
    <name type="scientific">Escherichia coli (strain K12 / MC4100 / BW2952)</name>
    <dbReference type="NCBI Taxonomy" id="595496"/>
    <lineage>
        <taxon>Bacteria</taxon>
        <taxon>Pseudomonadati</taxon>
        <taxon>Pseudomonadota</taxon>
        <taxon>Gammaproteobacteria</taxon>
        <taxon>Enterobacterales</taxon>
        <taxon>Enterobacteriaceae</taxon>
        <taxon>Escherichia</taxon>
    </lineage>
</organism>